<comment type="function">
    <text evidence="1">Mediates the interaction of DNA replication initiator protein DnaA with DNA polymerase subunit beta sliding clamp (dnaN). Stimulates hydrolysis of ATP-DnaA to ADP-DnaA, rendering DnaA inactive for reinitiation, a process called regulatory inhibition of DnaA or RIDA (By similarity).</text>
</comment>
<comment type="subunit">
    <text evidence="2">The active form seems to be an ADP-bound monomer. Forms the RIDA complex (regulatory inactivation of DnaA) of ATP-DnaA, ADP-Hda and the DNA-loaded beta sliding clamp (dnaN).</text>
</comment>
<comment type="similarity">
    <text evidence="2">Belongs to the DnaA family. HdA subfamily.</text>
</comment>
<comment type="sequence caution" evidence="3">
    <conflict type="erroneous initiation">
        <sequence resource="EMBL-CDS" id="ABE08272"/>
    </conflict>
</comment>
<evidence type="ECO:0000250" key="1"/>
<evidence type="ECO:0000255" key="2">
    <source>
        <dbReference type="HAMAP-Rule" id="MF_01158"/>
    </source>
</evidence>
<evidence type="ECO:0000305" key="3"/>
<keyword id="KW-0235">DNA replication</keyword>
<keyword id="KW-0236">DNA replication inhibitor</keyword>
<feature type="chain" id="PRO_1000065563" description="DnaA regulatory inactivator Hda">
    <location>
        <begin position="1"/>
        <end position="233"/>
    </location>
</feature>
<protein>
    <recommendedName>
        <fullName evidence="2">DnaA regulatory inactivator Hda</fullName>
    </recommendedName>
</protein>
<gene>
    <name evidence="2" type="primary">hda</name>
    <name type="ordered locus">UTI89_C2812</name>
</gene>
<accession>Q1R8P2</accession>
<dbReference type="EMBL" id="CP000243">
    <property type="protein sequence ID" value="ABE08272.1"/>
    <property type="status" value="ALT_INIT"/>
    <property type="molecule type" value="Genomic_DNA"/>
</dbReference>
<dbReference type="RefSeq" id="WP_001307333.1">
    <property type="nucleotide sequence ID" value="NZ_CP064825.1"/>
</dbReference>
<dbReference type="SMR" id="Q1R8P2"/>
<dbReference type="KEGG" id="eci:UTI89_C2812"/>
<dbReference type="HOGENOM" id="CLU_072265_1_1_6"/>
<dbReference type="Proteomes" id="UP000001952">
    <property type="component" value="Chromosome"/>
</dbReference>
<dbReference type="GO" id="GO:0006270">
    <property type="term" value="P:DNA replication initiation"/>
    <property type="evidence" value="ECO:0007669"/>
    <property type="project" value="TreeGrafter"/>
</dbReference>
<dbReference type="GO" id="GO:0032297">
    <property type="term" value="P:negative regulation of DNA-templated DNA replication initiation"/>
    <property type="evidence" value="ECO:0007669"/>
    <property type="project" value="InterPro"/>
</dbReference>
<dbReference type="FunFam" id="1.10.8.60:FF:000024">
    <property type="entry name" value="DnaA regulatory inactivator Hda"/>
    <property type="match status" value="1"/>
</dbReference>
<dbReference type="FunFam" id="3.40.50.300:FF:000452">
    <property type="entry name" value="DnaA regulatory inactivator Hda"/>
    <property type="match status" value="1"/>
</dbReference>
<dbReference type="Gene3D" id="1.10.8.60">
    <property type="match status" value="1"/>
</dbReference>
<dbReference type="Gene3D" id="3.40.50.300">
    <property type="entry name" value="P-loop containing nucleotide triphosphate hydrolases"/>
    <property type="match status" value="1"/>
</dbReference>
<dbReference type="HAMAP" id="MF_01158">
    <property type="entry name" value="Hda"/>
    <property type="match status" value="1"/>
</dbReference>
<dbReference type="InterPro" id="IPR020591">
    <property type="entry name" value="Chromosome_initiator_DnaA-like"/>
</dbReference>
<dbReference type="InterPro" id="IPR013317">
    <property type="entry name" value="DnaA_dom"/>
</dbReference>
<dbReference type="InterPro" id="IPR017788">
    <property type="entry name" value="Hda"/>
</dbReference>
<dbReference type="InterPro" id="IPR022864">
    <property type="entry name" value="Hda_Enterobact"/>
</dbReference>
<dbReference type="InterPro" id="IPR055199">
    <property type="entry name" value="Hda_lid"/>
</dbReference>
<dbReference type="InterPro" id="IPR027417">
    <property type="entry name" value="P-loop_NTPase"/>
</dbReference>
<dbReference type="NCBIfam" id="TIGR03420">
    <property type="entry name" value="DnaA_homol_Hda"/>
    <property type="match status" value="1"/>
</dbReference>
<dbReference type="NCBIfam" id="NF005982">
    <property type="entry name" value="PRK08084.1"/>
    <property type="match status" value="1"/>
</dbReference>
<dbReference type="PANTHER" id="PTHR30050">
    <property type="entry name" value="CHROMOSOMAL REPLICATION INITIATOR PROTEIN DNAA"/>
    <property type="match status" value="1"/>
</dbReference>
<dbReference type="PANTHER" id="PTHR30050:SF5">
    <property type="entry name" value="DNAA REGULATORY INACTIVATOR HDA"/>
    <property type="match status" value="1"/>
</dbReference>
<dbReference type="Pfam" id="PF00308">
    <property type="entry name" value="Bac_DnaA"/>
    <property type="match status" value="1"/>
</dbReference>
<dbReference type="Pfam" id="PF22688">
    <property type="entry name" value="Hda_lid"/>
    <property type="match status" value="1"/>
</dbReference>
<dbReference type="PRINTS" id="PR00051">
    <property type="entry name" value="DNAA"/>
</dbReference>
<dbReference type="SUPFAM" id="SSF52540">
    <property type="entry name" value="P-loop containing nucleoside triphosphate hydrolases"/>
    <property type="match status" value="1"/>
</dbReference>
<reference key="1">
    <citation type="journal article" date="2006" name="Proc. Natl. Acad. Sci. U.S.A.">
        <title>Identification of genes subject to positive selection in uropathogenic strains of Escherichia coli: a comparative genomics approach.</title>
        <authorList>
            <person name="Chen S.L."/>
            <person name="Hung C.-S."/>
            <person name="Xu J."/>
            <person name="Reigstad C.S."/>
            <person name="Magrini V."/>
            <person name="Sabo A."/>
            <person name="Blasiar D."/>
            <person name="Bieri T."/>
            <person name="Meyer R.R."/>
            <person name="Ozersky P."/>
            <person name="Armstrong J.R."/>
            <person name="Fulton R.S."/>
            <person name="Latreille J.P."/>
            <person name="Spieth J."/>
            <person name="Hooton T.M."/>
            <person name="Mardis E.R."/>
            <person name="Hultgren S.J."/>
            <person name="Gordon J.I."/>
        </authorList>
    </citation>
    <scope>NUCLEOTIDE SEQUENCE [LARGE SCALE GENOMIC DNA]</scope>
    <source>
        <strain>UTI89 / UPEC</strain>
    </source>
</reference>
<organism>
    <name type="scientific">Escherichia coli (strain UTI89 / UPEC)</name>
    <dbReference type="NCBI Taxonomy" id="364106"/>
    <lineage>
        <taxon>Bacteria</taxon>
        <taxon>Pseudomonadati</taxon>
        <taxon>Pseudomonadota</taxon>
        <taxon>Gammaproteobacteria</taxon>
        <taxon>Enterobacterales</taxon>
        <taxon>Enterobacteriaceae</taxon>
        <taxon>Escherichia</taxon>
    </lineage>
</organism>
<proteinExistence type="inferred from homology"/>
<name>HDA_ECOUT</name>
<sequence>MNTPAQLSLPLYLPDDETFASFWPGDNSSLLAALQNVLRQEHSGYIYLWAREGAGRSHLLHAACAELSQRGDAVGYVPLDKRTWFVPEVLDGMEHLSLVCIDNIECIAGDELWEMAIFDLYNRILESGKTRLLITGDRPPRQLNLGLPDLASRLDWGQIYKLQPLSDEDKLQALQLRARLRGFELPEDVGRFLLKRLDREMRTLFMTLDQLDRASITAQRKLTIPFVKEILKL</sequence>